<organism>
    <name type="scientific">Helicobacter pylori (strain J99 / ATCC 700824)</name>
    <name type="common">Campylobacter pylori J99</name>
    <dbReference type="NCBI Taxonomy" id="85963"/>
    <lineage>
        <taxon>Bacteria</taxon>
        <taxon>Pseudomonadati</taxon>
        <taxon>Campylobacterota</taxon>
        <taxon>Epsilonproteobacteria</taxon>
        <taxon>Campylobacterales</taxon>
        <taxon>Helicobacteraceae</taxon>
        <taxon>Helicobacter</taxon>
    </lineage>
</organism>
<gene>
    <name evidence="1" type="primary">dxr</name>
    <name type="ordered locus">jhp_0202</name>
</gene>
<name>DXR_HELPJ</name>
<reference key="1">
    <citation type="journal article" date="1999" name="Nature">
        <title>Genomic sequence comparison of two unrelated isolates of the human gastric pathogen Helicobacter pylori.</title>
        <authorList>
            <person name="Alm R.A."/>
            <person name="Ling L.-S.L."/>
            <person name="Moir D.T."/>
            <person name="King B.L."/>
            <person name="Brown E.D."/>
            <person name="Doig P.C."/>
            <person name="Smith D.R."/>
            <person name="Noonan B."/>
            <person name="Guild B.C."/>
            <person name="deJonge B.L."/>
            <person name="Carmel G."/>
            <person name="Tummino P.J."/>
            <person name="Caruso A."/>
            <person name="Uria-Nickelsen M."/>
            <person name="Mills D.M."/>
            <person name="Ives C."/>
            <person name="Gibson R."/>
            <person name="Merberg D."/>
            <person name="Mills S.D."/>
            <person name="Jiang Q."/>
            <person name="Taylor D.E."/>
            <person name="Vovis G.F."/>
            <person name="Trust T.J."/>
        </authorList>
    </citation>
    <scope>NUCLEOTIDE SEQUENCE [LARGE SCALE GENOMIC DNA]</scope>
    <source>
        <strain>J99 / ATCC 700824</strain>
    </source>
</reference>
<feature type="chain" id="PRO_0000163664" description="1-deoxy-D-xylulose 5-phosphate reductoisomerase">
    <location>
        <begin position="1"/>
        <end position="368"/>
    </location>
</feature>
<feature type="binding site" evidence="1">
    <location>
        <position position="7"/>
    </location>
    <ligand>
        <name>NADPH</name>
        <dbReference type="ChEBI" id="CHEBI:57783"/>
    </ligand>
</feature>
<feature type="binding site" evidence="1">
    <location>
        <position position="8"/>
    </location>
    <ligand>
        <name>NADPH</name>
        <dbReference type="ChEBI" id="CHEBI:57783"/>
    </ligand>
</feature>
<feature type="binding site" evidence="1">
    <location>
        <position position="9"/>
    </location>
    <ligand>
        <name>NADPH</name>
        <dbReference type="ChEBI" id="CHEBI:57783"/>
    </ligand>
</feature>
<feature type="binding site" evidence="1">
    <location>
        <position position="10"/>
    </location>
    <ligand>
        <name>NADPH</name>
        <dbReference type="ChEBI" id="CHEBI:57783"/>
    </ligand>
</feature>
<feature type="binding site" evidence="1">
    <location>
        <position position="31"/>
    </location>
    <ligand>
        <name>NADPH</name>
        <dbReference type="ChEBI" id="CHEBI:57783"/>
    </ligand>
</feature>
<feature type="binding site" evidence="1">
    <location>
        <position position="32"/>
    </location>
    <ligand>
        <name>NADPH</name>
        <dbReference type="ChEBI" id="CHEBI:57783"/>
    </ligand>
</feature>
<feature type="binding site" evidence="1">
    <location>
        <position position="33"/>
    </location>
    <ligand>
        <name>NADPH</name>
        <dbReference type="ChEBI" id="CHEBI:57783"/>
    </ligand>
</feature>
<feature type="binding site" evidence="1">
    <location>
        <position position="113"/>
    </location>
    <ligand>
        <name>NADPH</name>
        <dbReference type="ChEBI" id="CHEBI:57783"/>
    </ligand>
</feature>
<feature type="binding site" evidence="1">
    <location>
        <position position="114"/>
    </location>
    <ligand>
        <name>1-deoxy-D-xylulose 5-phosphate</name>
        <dbReference type="ChEBI" id="CHEBI:57792"/>
    </ligand>
</feature>
<feature type="binding site" evidence="1">
    <location>
        <position position="115"/>
    </location>
    <ligand>
        <name>NADPH</name>
        <dbReference type="ChEBI" id="CHEBI:57783"/>
    </ligand>
</feature>
<feature type="binding site" evidence="1">
    <location>
        <position position="133"/>
    </location>
    <ligand>
        <name>Mn(2+)</name>
        <dbReference type="ChEBI" id="CHEBI:29035"/>
    </ligand>
</feature>
<feature type="binding site" evidence="1">
    <location>
        <position position="134"/>
    </location>
    <ligand>
        <name>1-deoxy-D-xylulose 5-phosphate</name>
        <dbReference type="ChEBI" id="CHEBI:57792"/>
    </ligand>
</feature>
<feature type="binding site" evidence="1">
    <location>
        <position position="135"/>
    </location>
    <ligand>
        <name>1-deoxy-D-xylulose 5-phosphate</name>
        <dbReference type="ChEBI" id="CHEBI:57792"/>
    </ligand>
</feature>
<feature type="binding site" evidence="1">
    <location>
        <position position="135"/>
    </location>
    <ligand>
        <name>Mn(2+)</name>
        <dbReference type="ChEBI" id="CHEBI:29035"/>
    </ligand>
</feature>
<feature type="binding site" evidence="1">
    <location>
        <position position="158"/>
    </location>
    <ligand>
        <name>1-deoxy-D-xylulose 5-phosphate</name>
        <dbReference type="ChEBI" id="CHEBI:57792"/>
    </ligand>
</feature>
<feature type="binding site" evidence="1">
    <location>
        <position position="181"/>
    </location>
    <ligand>
        <name>1-deoxy-D-xylulose 5-phosphate</name>
        <dbReference type="ChEBI" id="CHEBI:57792"/>
    </ligand>
</feature>
<feature type="binding site" evidence="1">
    <location>
        <position position="187"/>
    </location>
    <ligand>
        <name>NADPH</name>
        <dbReference type="ChEBI" id="CHEBI:57783"/>
    </ligand>
</feature>
<feature type="binding site" evidence="1">
    <location>
        <position position="194"/>
    </location>
    <ligand>
        <name>1-deoxy-D-xylulose 5-phosphate</name>
        <dbReference type="ChEBI" id="CHEBI:57792"/>
    </ligand>
</feature>
<feature type="binding site" evidence="1">
    <location>
        <position position="199"/>
    </location>
    <ligand>
        <name>1-deoxy-D-xylulose 5-phosphate</name>
        <dbReference type="ChEBI" id="CHEBI:57792"/>
    </ligand>
</feature>
<feature type="binding site" evidence="1">
    <location>
        <position position="200"/>
    </location>
    <ligand>
        <name>1-deoxy-D-xylulose 5-phosphate</name>
        <dbReference type="ChEBI" id="CHEBI:57792"/>
    </ligand>
</feature>
<feature type="binding site" evidence="1">
    <location>
        <position position="203"/>
    </location>
    <ligand>
        <name>1-deoxy-D-xylulose 5-phosphate</name>
        <dbReference type="ChEBI" id="CHEBI:57792"/>
    </ligand>
</feature>
<feature type="binding site" evidence="1">
    <location>
        <position position="203"/>
    </location>
    <ligand>
        <name>Mn(2+)</name>
        <dbReference type="ChEBI" id="CHEBI:29035"/>
    </ligand>
</feature>
<evidence type="ECO:0000255" key="1">
    <source>
        <dbReference type="HAMAP-Rule" id="MF_00183"/>
    </source>
</evidence>
<protein>
    <recommendedName>
        <fullName evidence="1">1-deoxy-D-xylulose 5-phosphate reductoisomerase</fullName>
        <shortName evidence="1">DXP reductoisomerase</shortName>
        <ecNumber evidence="1">1.1.1.267</ecNumber>
    </recommendedName>
    <alternativeName>
        <fullName evidence="1">1-deoxyxylulose-5-phosphate reductoisomerase</fullName>
    </alternativeName>
    <alternativeName>
        <fullName evidence="1">2-C-methyl-D-erythritol 4-phosphate synthase</fullName>
    </alternativeName>
</protein>
<sequence>MVVLGSTGSIGKNALKIAKKFGVKIEALSCGKNIALINEQIKVFKPKKVAILDPNDLNNLEPLGAEVFVGLDGIDAMIEECVSNLVINAIVGVAGLKASFKSLQRNKKLALANKESLVSAGHLLDISQITPVDSEHFGLWALLQNKTLKPKSLIISASGGAFRDTPLDLIAIQNAQNALKHPNWSMGDKITIDSASMVNKLFEILETYWLFGASLKIDALIERSSIVHALVEFEDNSVIAHLASADMQLPISYAINPKLASLSASIKPLDLYALSAIKFEPISVERYTLWRYKDLLLENPKLGVVLNASNEVAMKKFLNQEIAFGGFIQIISQALELYAKKSFKLSSLDEVLALDKEVRERFGSVARV</sequence>
<comment type="function">
    <text evidence="1">Catalyzes the NADPH-dependent rearrangement and reduction of 1-deoxy-D-xylulose-5-phosphate (DXP) to 2-C-methyl-D-erythritol 4-phosphate (MEP).</text>
</comment>
<comment type="catalytic activity">
    <reaction evidence="1">
        <text>2-C-methyl-D-erythritol 4-phosphate + NADP(+) = 1-deoxy-D-xylulose 5-phosphate + NADPH + H(+)</text>
        <dbReference type="Rhea" id="RHEA:13717"/>
        <dbReference type="ChEBI" id="CHEBI:15378"/>
        <dbReference type="ChEBI" id="CHEBI:57783"/>
        <dbReference type="ChEBI" id="CHEBI:57792"/>
        <dbReference type="ChEBI" id="CHEBI:58262"/>
        <dbReference type="ChEBI" id="CHEBI:58349"/>
        <dbReference type="EC" id="1.1.1.267"/>
    </reaction>
    <physiologicalReaction direction="right-to-left" evidence="1">
        <dbReference type="Rhea" id="RHEA:13719"/>
    </physiologicalReaction>
</comment>
<comment type="cofactor">
    <cofactor evidence="1">
        <name>Mg(2+)</name>
        <dbReference type="ChEBI" id="CHEBI:18420"/>
    </cofactor>
    <cofactor evidence="1">
        <name>Mn(2+)</name>
        <dbReference type="ChEBI" id="CHEBI:29035"/>
    </cofactor>
</comment>
<comment type="pathway">
    <text evidence="1">Isoprenoid biosynthesis; isopentenyl diphosphate biosynthesis via DXP pathway; isopentenyl diphosphate from 1-deoxy-D-xylulose 5-phosphate: step 1/6.</text>
</comment>
<comment type="similarity">
    <text evidence="1">Belongs to the DXR family.</text>
</comment>
<keyword id="KW-0414">Isoprene biosynthesis</keyword>
<keyword id="KW-0464">Manganese</keyword>
<keyword id="KW-0479">Metal-binding</keyword>
<keyword id="KW-0521">NADP</keyword>
<keyword id="KW-0560">Oxidoreductase</keyword>
<dbReference type="EC" id="1.1.1.267" evidence="1"/>
<dbReference type="EMBL" id="AE001439">
    <property type="protein sequence ID" value="AAD05777.1"/>
    <property type="molecule type" value="Genomic_DNA"/>
</dbReference>
<dbReference type="PIR" id="G71961">
    <property type="entry name" value="G71961"/>
</dbReference>
<dbReference type="RefSeq" id="WP_000260775.1">
    <property type="nucleotide sequence ID" value="NC_000921.1"/>
</dbReference>
<dbReference type="SMR" id="Q9ZML6"/>
<dbReference type="KEGG" id="hpj:jhp_0202"/>
<dbReference type="PATRIC" id="fig|85963.30.peg.816"/>
<dbReference type="eggNOG" id="COG0743">
    <property type="taxonomic scope" value="Bacteria"/>
</dbReference>
<dbReference type="UniPathway" id="UPA00056">
    <property type="reaction ID" value="UER00092"/>
</dbReference>
<dbReference type="Proteomes" id="UP000000804">
    <property type="component" value="Chromosome"/>
</dbReference>
<dbReference type="GO" id="GO:0030604">
    <property type="term" value="F:1-deoxy-D-xylulose-5-phosphate reductoisomerase activity"/>
    <property type="evidence" value="ECO:0007669"/>
    <property type="project" value="UniProtKB-UniRule"/>
</dbReference>
<dbReference type="GO" id="GO:0030145">
    <property type="term" value="F:manganese ion binding"/>
    <property type="evidence" value="ECO:0007669"/>
    <property type="project" value="TreeGrafter"/>
</dbReference>
<dbReference type="GO" id="GO:0070402">
    <property type="term" value="F:NADPH binding"/>
    <property type="evidence" value="ECO:0007669"/>
    <property type="project" value="InterPro"/>
</dbReference>
<dbReference type="GO" id="GO:0051484">
    <property type="term" value="P:isopentenyl diphosphate biosynthetic process, methylerythritol 4-phosphate pathway involved in terpenoid biosynthetic process"/>
    <property type="evidence" value="ECO:0007669"/>
    <property type="project" value="TreeGrafter"/>
</dbReference>
<dbReference type="FunFam" id="3.40.50.720:FF:000771">
    <property type="entry name" value="1-deoxy-D-xylulose 5-phosphate reductoisomerase"/>
    <property type="match status" value="1"/>
</dbReference>
<dbReference type="Gene3D" id="1.10.1740.10">
    <property type="match status" value="1"/>
</dbReference>
<dbReference type="Gene3D" id="3.40.50.720">
    <property type="entry name" value="NAD(P)-binding Rossmann-like Domain"/>
    <property type="match status" value="1"/>
</dbReference>
<dbReference type="HAMAP" id="MF_00183">
    <property type="entry name" value="DXP_reductoisom"/>
    <property type="match status" value="1"/>
</dbReference>
<dbReference type="InterPro" id="IPR003821">
    <property type="entry name" value="DXP_reductoisomerase"/>
</dbReference>
<dbReference type="InterPro" id="IPR013644">
    <property type="entry name" value="DXP_reductoisomerase_C"/>
</dbReference>
<dbReference type="InterPro" id="IPR013512">
    <property type="entry name" value="DXP_reductoisomerase_N"/>
</dbReference>
<dbReference type="InterPro" id="IPR026877">
    <property type="entry name" value="DXPR_C"/>
</dbReference>
<dbReference type="InterPro" id="IPR036169">
    <property type="entry name" value="DXPR_C_sf"/>
</dbReference>
<dbReference type="InterPro" id="IPR036291">
    <property type="entry name" value="NAD(P)-bd_dom_sf"/>
</dbReference>
<dbReference type="NCBIfam" id="TIGR00243">
    <property type="entry name" value="Dxr"/>
    <property type="match status" value="1"/>
</dbReference>
<dbReference type="PANTHER" id="PTHR30525">
    <property type="entry name" value="1-DEOXY-D-XYLULOSE 5-PHOSPHATE REDUCTOISOMERASE"/>
    <property type="match status" value="1"/>
</dbReference>
<dbReference type="PANTHER" id="PTHR30525:SF0">
    <property type="entry name" value="1-DEOXY-D-XYLULOSE 5-PHOSPHATE REDUCTOISOMERASE, CHLOROPLASTIC"/>
    <property type="match status" value="1"/>
</dbReference>
<dbReference type="Pfam" id="PF08436">
    <property type="entry name" value="DXP_redisom_C"/>
    <property type="match status" value="1"/>
</dbReference>
<dbReference type="Pfam" id="PF02670">
    <property type="entry name" value="DXP_reductoisom"/>
    <property type="match status" value="1"/>
</dbReference>
<dbReference type="Pfam" id="PF13288">
    <property type="entry name" value="DXPR_C"/>
    <property type="match status" value="1"/>
</dbReference>
<dbReference type="PIRSF" id="PIRSF006205">
    <property type="entry name" value="Dxp_reductismrs"/>
    <property type="match status" value="1"/>
</dbReference>
<dbReference type="SUPFAM" id="SSF69055">
    <property type="entry name" value="1-deoxy-D-xylulose-5-phosphate reductoisomerase, C-terminal domain"/>
    <property type="match status" value="1"/>
</dbReference>
<dbReference type="SUPFAM" id="SSF55347">
    <property type="entry name" value="Glyceraldehyde-3-phosphate dehydrogenase-like, C-terminal domain"/>
    <property type="match status" value="1"/>
</dbReference>
<dbReference type="SUPFAM" id="SSF51735">
    <property type="entry name" value="NAD(P)-binding Rossmann-fold domains"/>
    <property type="match status" value="1"/>
</dbReference>
<proteinExistence type="inferred from homology"/>
<accession>Q9ZML6</accession>